<accession>A0B9K3</accession>
<comment type="function">
    <text evidence="1">Component of the A-type ATP synthase that produces ATP from ADP in the presence of a proton gradient across the membrane.</text>
</comment>
<comment type="subunit">
    <text evidence="1">Has multiple subunits with at least A(3), B(3), C, D, E, F, H, I and proteolipid K(x).</text>
</comment>
<comment type="subcellular location">
    <subcellularLocation>
        <location evidence="1">Cell membrane</location>
        <topology evidence="1">Peripheral membrane protein</topology>
    </subcellularLocation>
</comment>
<comment type="similarity">
    <text evidence="1">Belongs to the V-ATPase F subunit family.</text>
</comment>
<reference key="1">
    <citation type="submission" date="2006-10" db="EMBL/GenBank/DDBJ databases">
        <title>Complete sequence of Methanosaeta thermophila PT.</title>
        <authorList>
            <consortium name="US DOE Joint Genome Institute"/>
            <person name="Copeland A."/>
            <person name="Lucas S."/>
            <person name="Lapidus A."/>
            <person name="Barry K."/>
            <person name="Detter J.C."/>
            <person name="Glavina del Rio T."/>
            <person name="Hammon N."/>
            <person name="Israni S."/>
            <person name="Pitluck S."/>
            <person name="Chain P."/>
            <person name="Malfatti S."/>
            <person name="Shin M."/>
            <person name="Vergez L."/>
            <person name="Schmutz J."/>
            <person name="Larimer F."/>
            <person name="Land M."/>
            <person name="Hauser L."/>
            <person name="Kyrpides N."/>
            <person name="Kim E."/>
            <person name="Smith K.S."/>
            <person name="Ingram-Smith C."/>
            <person name="Richardson P."/>
        </authorList>
    </citation>
    <scope>NUCLEOTIDE SEQUENCE [LARGE SCALE GENOMIC DNA]</scope>
    <source>
        <strain>DSM 6194 / JCM 14653 / NBRC 101360 / PT</strain>
    </source>
</reference>
<gene>
    <name evidence="1" type="primary">atpF</name>
    <name type="ordered locus">Mthe_1610</name>
</gene>
<feature type="chain" id="PRO_1000059436" description="A-type ATP synthase subunit F">
    <location>
        <begin position="1"/>
        <end position="99"/>
    </location>
</feature>
<keyword id="KW-0066">ATP synthesis</keyword>
<keyword id="KW-1003">Cell membrane</keyword>
<keyword id="KW-0375">Hydrogen ion transport</keyword>
<keyword id="KW-0406">Ion transport</keyword>
<keyword id="KW-0472">Membrane</keyword>
<keyword id="KW-1185">Reference proteome</keyword>
<keyword id="KW-0813">Transport</keyword>
<name>AATF_METTP</name>
<sequence>MEIAVIGNSDAVIGFSLAGIKKAYEATSEEELINKINEVMADPNVGILVLHQNDYNRLPKRLQSTLSNSVRPTVIAIGTEQSTEMREKIKRAIGVDLWK</sequence>
<evidence type="ECO:0000255" key="1">
    <source>
        <dbReference type="HAMAP-Rule" id="MF_00312"/>
    </source>
</evidence>
<proteinExistence type="inferred from homology"/>
<protein>
    <recommendedName>
        <fullName evidence="1">A-type ATP synthase subunit F</fullName>
    </recommendedName>
</protein>
<organism>
    <name type="scientific">Methanothrix thermoacetophila (strain DSM 6194 / JCM 14653 / NBRC 101360 / PT)</name>
    <name type="common">Methanosaeta thermophila</name>
    <dbReference type="NCBI Taxonomy" id="349307"/>
    <lineage>
        <taxon>Archaea</taxon>
        <taxon>Methanobacteriati</taxon>
        <taxon>Methanobacteriota</taxon>
        <taxon>Stenosarchaea group</taxon>
        <taxon>Methanomicrobia</taxon>
        <taxon>Methanotrichales</taxon>
        <taxon>Methanotrichaceae</taxon>
        <taxon>Methanothrix</taxon>
    </lineage>
</organism>
<dbReference type="EMBL" id="CP000477">
    <property type="protein sequence ID" value="ABK15377.1"/>
    <property type="molecule type" value="Genomic_DNA"/>
</dbReference>
<dbReference type="RefSeq" id="WP_011696755.1">
    <property type="nucleotide sequence ID" value="NC_008553.1"/>
</dbReference>
<dbReference type="SMR" id="A0B9K3"/>
<dbReference type="STRING" id="349307.Mthe_1610"/>
<dbReference type="GeneID" id="4462041"/>
<dbReference type="KEGG" id="mtp:Mthe_1610"/>
<dbReference type="HOGENOM" id="CLU_135754_2_2_2"/>
<dbReference type="OrthoDB" id="24971at2157"/>
<dbReference type="Proteomes" id="UP000000674">
    <property type="component" value="Chromosome"/>
</dbReference>
<dbReference type="GO" id="GO:0005886">
    <property type="term" value="C:plasma membrane"/>
    <property type="evidence" value="ECO:0007669"/>
    <property type="project" value="UniProtKB-SubCell"/>
</dbReference>
<dbReference type="GO" id="GO:0005524">
    <property type="term" value="F:ATP binding"/>
    <property type="evidence" value="ECO:0007669"/>
    <property type="project" value="UniProtKB-UniRule"/>
</dbReference>
<dbReference type="GO" id="GO:0046933">
    <property type="term" value="F:proton-transporting ATP synthase activity, rotational mechanism"/>
    <property type="evidence" value="ECO:0007669"/>
    <property type="project" value="UniProtKB-UniRule"/>
</dbReference>
<dbReference type="GO" id="GO:0046961">
    <property type="term" value="F:proton-transporting ATPase activity, rotational mechanism"/>
    <property type="evidence" value="ECO:0007669"/>
    <property type="project" value="InterPro"/>
</dbReference>
<dbReference type="GO" id="GO:0042777">
    <property type="term" value="P:proton motive force-driven plasma membrane ATP synthesis"/>
    <property type="evidence" value="ECO:0007669"/>
    <property type="project" value="UniProtKB-UniRule"/>
</dbReference>
<dbReference type="Gene3D" id="3.40.50.10580">
    <property type="entry name" value="ATPase, V1 complex, subunit F"/>
    <property type="match status" value="1"/>
</dbReference>
<dbReference type="HAMAP" id="MF_00312">
    <property type="entry name" value="ATP_synth_F_arch"/>
    <property type="match status" value="1"/>
</dbReference>
<dbReference type="InterPro" id="IPR008218">
    <property type="entry name" value="ATPase_V1-cplx_f_g_su"/>
</dbReference>
<dbReference type="InterPro" id="IPR022944">
    <property type="entry name" value="ATPase_V1-cplx_fsu_bac/arc"/>
</dbReference>
<dbReference type="InterPro" id="IPR036906">
    <property type="entry name" value="ATPase_V1_fsu_sf"/>
</dbReference>
<dbReference type="NCBIfam" id="NF002577">
    <property type="entry name" value="PRK02228.1"/>
    <property type="match status" value="1"/>
</dbReference>
<dbReference type="Pfam" id="PF01990">
    <property type="entry name" value="ATP-synt_F"/>
    <property type="match status" value="1"/>
</dbReference>
<dbReference type="SUPFAM" id="SSF159468">
    <property type="entry name" value="AtpF-like"/>
    <property type="match status" value="1"/>
</dbReference>